<keyword id="KW-0325">Glycoprotein</keyword>
<keyword id="KW-1185">Reference proteome</keyword>
<keyword id="KW-0964">Secreted</keyword>
<keyword id="KW-0732">Signal</keyword>
<reference key="1">
    <citation type="submission" date="2004-11" db="EMBL/GenBank/DDBJ databases">
        <authorList>
            <consortium name="The German cDNA consortium"/>
        </authorList>
    </citation>
    <scope>NUCLEOTIDE SEQUENCE [LARGE SCALE MRNA]</scope>
    <source>
        <tissue>Brain cortex</tissue>
    </source>
</reference>
<name>CAH11_PONAB</name>
<dbReference type="EMBL" id="CR860631">
    <property type="protein sequence ID" value="CAH92751.1"/>
    <property type="molecule type" value="mRNA"/>
</dbReference>
<dbReference type="RefSeq" id="NP_001128968.1">
    <property type="nucleotide sequence ID" value="NM_001135496.1"/>
</dbReference>
<dbReference type="SMR" id="Q5R665"/>
<dbReference type="STRING" id="9601.ENSPPYP00000011417"/>
<dbReference type="GlyCosmos" id="Q5R665">
    <property type="glycosylation" value="3 sites, No reported glycans"/>
</dbReference>
<dbReference type="GeneID" id="100190808"/>
<dbReference type="KEGG" id="pon:100190808"/>
<dbReference type="CTD" id="770"/>
<dbReference type="eggNOG" id="KOG0382">
    <property type="taxonomic scope" value="Eukaryota"/>
</dbReference>
<dbReference type="InParanoid" id="Q5R665"/>
<dbReference type="OrthoDB" id="5978072at2759"/>
<dbReference type="Proteomes" id="UP000001595">
    <property type="component" value="Unplaced"/>
</dbReference>
<dbReference type="GO" id="GO:0016323">
    <property type="term" value="C:basolateral plasma membrane"/>
    <property type="evidence" value="ECO:0007669"/>
    <property type="project" value="TreeGrafter"/>
</dbReference>
<dbReference type="GO" id="GO:0005576">
    <property type="term" value="C:extracellular region"/>
    <property type="evidence" value="ECO:0007669"/>
    <property type="project" value="UniProtKB-SubCell"/>
</dbReference>
<dbReference type="GO" id="GO:0016836">
    <property type="term" value="F:hydro-lyase activity"/>
    <property type="evidence" value="ECO:0007669"/>
    <property type="project" value="TreeGrafter"/>
</dbReference>
<dbReference type="GO" id="GO:0008270">
    <property type="term" value="F:zinc ion binding"/>
    <property type="evidence" value="ECO:0007669"/>
    <property type="project" value="InterPro"/>
</dbReference>
<dbReference type="GO" id="GO:0006730">
    <property type="term" value="P:one-carbon metabolic process"/>
    <property type="evidence" value="ECO:0007669"/>
    <property type="project" value="TreeGrafter"/>
</dbReference>
<dbReference type="CDD" id="cd03121">
    <property type="entry name" value="alpha_CARP_X_XI_like"/>
    <property type="match status" value="1"/>
</dbReference>
<dbReference type="FunFam" id="3.10.200.10:FF:000002">
    <property type="entry name" value="Carbonic anhydrase-related protein 10"/>
    <property type="match status" value="1"/>
</dbReference>
<dbReference type="Gene3D" id="3.10.200.10">
    <property type="entry name" value="Alpha carbonic anhydrase"/>
    <property type="match status" value="1"/>
</dbReference>
<dbReference type="InterPro" id="IPR041878">
    <property type="entry name" value="Alpha_CARP_X/XI"/>
</dbReference>
<dbReference type="InterPro" id="IPR001148">
    <property type="entry name" value="CA_dom"/>
</dbReference>
<dbReference type="InterPro" id="IPR036398">
    <property type="entry name" value="CA_dom_sf"/>
</dbReference>
<dbReference type="InterPro" id="IPR023561">
    <property type="entry name" value="Carbonic_anhydrase_a-class"/>
</dbReference>
<dbReference type="PANTHER" id="PTHR18952">
    <property type="entry name" value="CARBONIC ANHYDRASE"/>
    <property type="match status" value="1"/>
</dbReference>
<dbReference type="PANTHER" id="PTHR18952:SF93">
    <property type="entry name" value="CARBONIC ANHYDRASE-RELATED PROTEIN 11"/>
    <property type="match status" value="1"/>
</dbReference>
<dbReference type="Pfam" id="PF00194">
    <property type="entry name" value="Carb_anhydrase"/>
    <property type="match status" value="1"/>
</dbReference>
<dbReference type="SMART" id="SM01057">
    <property type="entry name" value="Carb_anhydrase"/>
    <property type="match status" value="1"/>
</dbReference>
<dbReference type="SUPFAM" id="SSF51069">
    <property type="entry name" value="Carbonic anhydrase"/>
    <property type="match status" value="1"/>
</dbReference>
<dbReference type="PROSITE" id="PS51144">
    <property type="entry name" value="ALPHA_CA_2"/>
    <property type="match status" value="1"/>
</dbReference>
<proteinExistence type="evidence at transcript level"/>
<sequence length="328" mass="36238">MGAAARLSAPRALVLWAALGAAAHIGPAPDPEDWWSYKDNLQGNFVPGPPFWGLVNAAWSLCAVGKRQSPVDVELKRVLYDPFLPPLRLSTGGEKLRGTLYNTGRHVSFLPAPRPVVNVSGGPLLYSHRLSELRLLFGARDGAGSEHQINHQGFSAEVQLIHFNQELYGNFSAASRGPNGLAILSLFVNVASTSNPFLSRLLNRDTITRISYKNDAYFLQDLSLELLFPESFGFITYQGSLSTPPCSETVTWILIDRALNITSLQMHSLRLLSQNPPSQIFRSLSGNSRPLQPLAHRALRGNRDPRHPERRCRGPNYRLHVDGAPHGR</sequence>
<gene>
    <name type="primary">CA11</name>
</gene>
<comment type="function">
    <text evidence="1">Does not have a catalytic activity.</text>
</comment>
<comment type="subcellular location">
    <subcellularLocation>
        <location evidence="5">Secreted</location>
    </subcellularLocation>
</comment>
<comment type="similarity">
    <text evidence="5">Belongs to the alpha-carbonic anhydrase family.</text>
</comment>
<organism>
    <name type="scientific">Pongo abelii</name>
    <name type="common">Sumatran orangutan</name>
    <name type="synonym">Pongo pygmaeus abelii</name>
    <dbReference type="NCBI Taxonomy" id="9601"/>
    <lineage>
        <taxon>Eukaryota</taxon>
        <taxon>Metazoa</taxon>
        <taxon>Chordata</taxon>
        <taxon>Craniata</taxon>
        <taxon>Vertebrata</taxon>
        <taxon>Euteleostomi</taxon>
        <taxon>Mammalia</taxon>
        <taxon>Eutheria</taxon>
        <taxon>Euarchontoglires</taxon>
        <taxon>Primates</taxon>
        <taxon>Haplorrhini</taxon>
        <taxon>Catarrhini</taxon>
        <taxon>Hominidae</taxon>
        <taxon>Pongo</taxon>
    </lineage>
</organism>
<protein>
    <recommendedName>
        <fullName>Carbonic anhydrase-related protein 11</fullName>
    </recommendedName>
    <alternativeName>
        <fullName>CA-RP XI</fullName>
        <shortName>CA-XI</shortName>
        <shortName>CARP XI</shortName>
    </alternativeName>
</protein>
<feature type="signal peptide" evidence="2">
    <location>
        <begin position="1"/>
        <end position="23"/>
    </location>
</feature>
<feature type="chain" id="PRO_0000262537" description="Carbonic anhydrase-related protein 11">
    <location>
        <begin position="24"/>
        <end position="328"/>
    </location>
</feature>
<feature type="domain" description="Alpha-carbonic anhydrase" evidence="3">
    <location>
        <begin position="33"/>
        <end position="303"/>
    </location>
</feature>
<feature type="region of interest" description="Disordered" evidence="4">
    <location>
        <begin position="299"/>
        <end position="328"/>
    </location>
</feature>
<feature type="compositionally biased region" description="Basic and acidic residues" evidence="4">
    <location>
        <begin position="319"/>
        <end position="328"/>
    </location>
</feature>
<feature type="glycosylation site" description="N-linked (GlcNAc...) asparagine" evidence="2">
    <location>
        <position position="118"/>
    </location>
</feature>
<feature type="glycosylation site" description="N-linked (GlcNAc...) asparagine" evidence="2">
    <location>
        <position position="170"/>
    </location>
</feature>
<feature type="glycosylation site" description="N-linked (GlcNAc...) asparagine" evidence="2">
    <location>
        <position position="260"/>
    </location>
</feature>
<evidence type="ECO:0000250" key="1"/>
<evidence type="ECO:0000255" key="2"/>
<evidence type="ECO:0000255" key="3">
    <source>
        <dbReference type="PROSITE-ProRule" id="PRU01134"/>
    </source>
</evidence>
<evidence type="ECO:0000256" key="4">
    <source>
        <dbReference type="SAM" id="MobiDB-lite"/>
    </source>
</evidence>
<evidence type="ECO:0000305" key="5"/>
<accession>Q5R665</accession>